<accession>Q8XV50</accession>
<protein>
    <recommendedName>
        <fullName evidence="1">Protein-methionine-sulfoxide reductase catalytic subunit MsrP</fullName>
        <ecNumber evidence="1">1.8.5.-</ecNumber>
    </recommendedName>
</protein>
<dbReference type="EC" id="1.8.5.-" evidence="1"/>
<dbReference type="EMBL" id="AL646052">
    <property type="protein sequence ID" value="CAD16690.1"/>
    <property type="molecule type" value="Genomic_DNA"/>
</dbReference>
<dbReference type="RefSeq" id="WP_011002886.1">
    <property type="nucleotide sequence ID" value="NC_003295.1"/>
</dbReference>
<dbReference type="SMR" id="Q8XV50"/>
<dbReference type="STRING" id="267608.RSc2981"/>
<dbReference type="EnsemblBacteria" id="CAD16690">
    <property type="protein sequence ID" value="CAD16690"/>
    <property type="gene ID" value="RSc2981"/>
</dbReference>
<dbReference type="KEGG" id="rso:RSc2981"/>
<dbReference type="eggNOG" id="COG2041">
    <property type="taxonomic scope" value="Bacteria"/>
</dbReference>
<dbReference type="HOGENOM" id="CLU_045520_0_0_4"/>
<dbReference type="Proteomes" id="UP000001436">
    <property type="component" value="Chromosome"/>
</dbReference>
<dbReference type="GO" id="GO:0042597">
    <property type="term" value="C:periplasmic space"/>
    <property type="evidence" value="ECO:0007669"/>
    <property type="project" value="UniProtKB-SubCell"/>
</dbReference>
<dbReference type="GO" id="GO:0046872">
    <property type="term" value="F:metal ion binding"/>
    <property type="evidence" value="ECO:0007669"/>
    <property type="project" value="UniProtKB-KW"/>
</dbReference>
<dbReference type="GO" id="GO:0043546">
    <property type="term" value="F:molybdopterin cofactor binding"/>
    <property type="evidence" value="ECO:0007669"/>
    <property type="project" value="UniProtKB-UniRule"/>
</dbReference>
<dbReference type="GO" id="GO:0016672">
    <property type="term" value="F:oxidoreductase activity, acting on a sulfur group of donors, quinone or similar compound as acceptor"/>
    <property type="evidence" value="ECO:0007669"/>
    <property type="project" value="UniProtKB-UniRule"/>
</dbReference>
<dbReference type="GO" id="GO:0030091">
    <property type="term" value="P:protein repair"/>
    <property type="evidence" value="ECO:0007669"/>
    <property type="project" value="UniProtKB-UniRule"/>
</dbReference>
<dbReference type="CDD" id="cd02107">
    <property type="entry name" value="YedY_like_Moco"/>
    <property type="match status" value="1"/>
</dbReference>
<dbReference type="Gene3D" id="3.90.420.10">
    <property type="entry name" value="Oxidoreductase, molybdopterin-binding domain"/>
    <property type="match status" value="1"/>
</dbReference>
<dbReference type="HAMAP" id="MF_01206">
    <property type="entry name" value="MsrP"/>
    <property type="match status" value="1"/>
</dbReference>
<dbReference type="InterPro" id="IPR022867">
    <property type="entry name" value="MsrP"/>
</dbReference>
<dbReference type="InterPro" id="IPR000572">
    <property type="entry name" value="OxRdtase_Mopterin-bd_dom"/>
</dbReference>
<dbReference type="InterPro" id="IPR036374">
    <property type="entry name" value="OxRdtase_Mopterin-bd_sf"/>
</dbReference>
<dbReference type="InterPro" id="IPR006311">
    <property type="entry name" value="TAT_signal"/>
</dbReference>
<dbReference type="NCBIfam" id="NF003767">
    <property type="entry name" value="PRK05363.1"/>
    <property type="match status" value="1"/>
</dbReference>
<dbReference type="PANTHER" id="PTHR43032">
    <property type="entry name" value="PROTEIN-METHIONINE-SULFOXIDE REDUCTASE"/>
    <property type="match status" value="1"/>
</dbReference>
<dbReference type="PANTHER" id="PTHR43032:SF3">
    <property type="entry name" value="PROTEIN-METHIONINE-SULFOXIDE REDUCTASE CATALYTIC SUBUNIT MSRP"/>
    <property type="match status" value="1"/>
</dbReference>
<dbReference type="Pfam" id="PF00174">
    <property type="entry name" value="Oxidored_molyb"/>
    <property type="match status" value="1"/>
</dbReference>
<dbReference type="SUPFAM" id="SSF56524">
    <property type="entry name" value="Oxidoreductase molybdopterin-binding domain"/>
    <property type="match status" value="1"/>
</dbReference>
<dbReference type="PROSITE" id="PS51318">
    <property type="entry name" value="TAT"/>
    <property type="match status" value="1"/>
</dbReference>
<organism>
    <name type="scientific">Ralstonia nicotianae (strain ATCC BAA-1114 / GMI1000)</name>
    <name type="common">Ralstonia solanacearum</name>
    <dbReference type="NCBI Taxonomy" id="267608"/>
    <lineage>
        <taxon>Bacteria</taxon>
        <taxon>Pseudomonadati</taxon>
        <taxon>Pseudomonadota</taxon>
        <taxon>Betaproteobacteria</taxon>
        <taxon>Burkholderiales</taxon>
        <taxon>Burkholderiaceae</taxon>
        <taxon>Ralstonia</taxon>
        <taxon>Ralstonia solanacearum species complex</taxon>
    </lineage>
</organism>
<gene>
    <name evidence="1" type="primary">msrP</name>
    <name type="ordered locus">RSc2981</name>
    <name type="ORF">RS01260</name>
</gene>
<comment type="function">
    <text evidence="1">Part of the MsrPQ system that repairs oxidized periplasmic proteins containing methionine sulfoxide residues (Met-O), using respiratory chain electrons. Thus protects these proteins from oxidative-stress damage caused by reactive species of oxygen and chlorine generated by the host defense mechanisms. MsrPQ is essential for the maintenance of envelope integrity under bleach stress, rescuing a wide series of structurally unrelated periplasmic proteins from methionine oxidation. The catalytic subunit MsrP is non-stereospecific, being able to reduce both (R-) and (S-) diastereoisomers of methionine sulfoxide.</text>
</comment>
<comment type="catalytic activity">
    <reaction evidence="1">
        <text>L-methionyl-[protein] + a quinone + H2O = L-methionyl-(S)-S-oxide-[protein] + a quinol</text>
        <dbReference type="Rhea" id="RHEA:51292"/>
        <dbReference type="Rhea" id="RHEA-COMP:12313"/>
        <dbReference type="Rhea" id="RHEA-COMP:12315"/>
        <dbReference type="ChEBI" id="CHEBI:15377"/>
        <dbReference type="ChEBI" id="CHEBI:16044"/>
        <dbReference type="ChEBI" id="CHEBI:24646"/>
        <dbReference type="ChEBI" id="CHEBI:44120"/>
        <dbReference type="ChEBI" id="CHEBI:132124"/>
    </reaction>
</comment>
<comment type="catalytic activity">
    <reaction evidence="1">
        <text>L-methionyl-[protein] + a quinone + H2O = L-methionyl-(R)-S-oxide-[protein] + a quinol</text>
        <dbReference type="Rhea" id="RHEA:51296"/>
        <dbReference type="Rhea" id="RHEA-COMP:12313"/>
        <dbReference type="Rhea" id="RHEA-COMP:12314"/>
        <dbReference type="ChEBI" id="CHEBI:15377"/>
        <dbReference type="ChEBI" id="CHEBI:16044"/>
        <dbReference type="ChEBI" id="CHEBI:24646"/>
        <dbReference type="ChEBI" id="CHEBI:45764"/>
        <dbReference type="ChEBI" id="CHEBI:132124"/>
    </reaction>
</comment>
<comment type="cofactor">
    <cofactor evidence="1">
        <name>Mo-molybdopterin</name>
        <dbReference type="ChEBI" id="CHEBI:71302"/>
    </cofactor>
    <text evidence="1">Binds 1 Mo-molybdopterin (Mo-MPT) cofactor per subunit.</text>
</comment>
<comment type="subunit">
    <text evidence="1">Heterodimer of a catalytic subunit (MsrP) and a heme-binding subunit (MsrQ).</text>
</comment>
<comment type="subcellular location">
    <subcellularLocation>
        <location evidence="1">Periplasm</location>
    </subcellularLocation>
    <text evidence="1">Is attached to the inner membrane when interacting with the MsrQ subunit.</text>
</comment>
<comment type="PTM">
    <text evidence="1">Predicted to be exported by the Tat system. The position of the signal peptide cleavage has not been experimentally proven.</text>
</comment>
<comment type="similarity">
    <text evidence="1">Belongs to the MsrP family.</text>
</comment>
<evidence type="ECO:0000255" key="1">
    <source>
        <dbReference type="HAMAP-Rule" id="MF_01206"/>
    </source>
</evidence>
<proteinExistence type="inferred from homology"/>
<reference key="1">
    <citation type="journal article" date="2002" name="Nature">
        <title>Genome sequence of the plant pathogen Ralstonia solanacearum.</title>
        <authorList>
            <person name="Salanoubat M."/>
            <person name="Genin S."/>
            <person name="Artiguenave F."/>
            <person name="Gouzy J."/>
            <person name="Mangenot S."/>
            <person name="Arlat M."/>
            <person name="Billault A."/>
            <person name="Brottier P."/>
            <person name="Camus J.-C."/>
            <person name="Cattolico L."/>
            <person name="Chandler M."/>
            <person name="Choisne N."/>
            <person name="Claudel-Renard C."/>
            <person name="Cunnac S."/>
            <person name="Demange N."/>
            <person name="Gaspin C."/>
            <person name="Lavie M."/>
            <person name="Moisan A."/>
            <person name="Robert C."/>
            <person name="Saurin W."/>
            <person name="Schiex T."/>
            <person name="Siguier P."/>
            <person name="Thebault P."/>
            <person name="Whalen M."/>
            <person name="Wincker P."/>
            <person name="Levy M."/>
            <person name="Weissenbach J."/>
            <person name="Boucher C.A."/>
        </authorList>
    </citation>
    <scope>NUCLEOTIDE SEQUENCE [LARGE SCALE GENOMIC DNA]</scope>
    <source>
        <strain>ATCC BAA-1114 / GMI1000</strain>
    </source>
</reference>
<sequence length="331" mass="37302">MLIKTDRWLRGDDIPASEITPQHLFDQRRRLLAAAALGAAGAALSPWAARRAFAASPAPAWLAAKPNPAYATVEKPTPFDEVTTYNNFYEFGTDKSDPARYAGTLRPHPWQVSVEGLVKAPKTYDLDDLMKMAPMEERIYRLRCVEGWSMVIPWVGFPLAELIRRVEPQGSARYIQFISLADKRQMPGVSSPVLDWPYSEGLRMDEAMHPLVLLTFGLYGQVLPNQNGAPVRVIVPWKYGFKSAKSIVRIRFVDKQPPTSWNIAAPNEYGFYSNVNPSVDHPRWSQATERRIGEDKGGFGGLFAPKRKTLMFNGYDQVASLYTGMDLRKFF</sequence>
<feature type="signal peptide" description="Tat-type signal" evidence="1">
    <location>
        <begin position="1"/>
        <end position="54"/>
    </location>
</feature>
<feature type="chain" id="PRO_0000070694" description="Protein-methionine-sulfoxide reductase catalytic subunit MsrP" evidence="1">
    <location>
        <begin position="55"/>
        <end position="331"/>
    </location>
</feature>
<feature type="binding site" evidence="1">
    <location>
        <position position="86"/>
    </location>
    <ligand>
        <name>Mo-molybdopterin</name>
        <dbReference type="ChEBI" id="CHEBI:71302"/>
    </ligand>
</feature>
<feature type="binding site" evidence="1">
    <location>
        <begin position="89"/>
        <end position="90"/>
    </location>
    <ligand>
        <name>Mo-molybdopterin</name>
        <dbReference type="ChEBI" id="CHEBI:71302"/>
    </ligand>
</feature>
<feature type="binding site" evidence="1">
    <location>
        <position position="144"/>
    </location>
    <ligand>
        <name>Mo-molybdopterin</name>
        <dbReference type="ChEBI" id="CHEBI:71302"/>
    </ligand>
    <ligandPart>
        <name>Mo</name>
        <dbReference type="ChEBI" id="CHEBI:28685"/>
    </ligandPart>
</feature>
<feature type="binding site" evidence="1">
    <location>
        <position position="179"/>
    </location>
    <ligand>
        <name>Mo-molybdopterin</name>
        <dbReference type="ChEBI" id="CHEBI:71302"/>
    </ligand>
</feature>
<feature type="binding site" evidence="1">
    <location>
        <position position="227"/>
    </location>
    <ligand>
        <name>Mo-molybdopterin</name>
        <dbReference type="ChEBI" id="CHEBI:71302"/>
    </ligand>
</feature>
<feature type="binding site" evidence="1">
    <location>
        <position position="232"/>
    </location>
    <ligand>
        <name>Mo-molybdopterin</name>
        <dbReference type="ChEBI" id="CHEBI:71302"/>
    </ligand>
</feature>
<feature type="binding site" evidence="1">
    <location>
        <begin position="243"/>
        <end position="245"/>
    </location>
    <ligand>
        <name>Mo-molybdopterin</name>
        <dbReference type="ChEBI" id="CHEBI:71302"/>
    </ligand>
</feature>
<keyword id="KW-0479">Metal-binding</keyword>
<keyword id="KW-0500">Molybdenum</keyword>
<keyword id="KW-0560">Oxidoreductase</keyword>
<keyword id="KW-0574">Periplasm</keyword>
<keyword id="KW-1185">Reference proteome</keyword>
<keyword id="KW-0732">Signal</keyword>
<name>MSRP_RALN1</name>